<name>ENV_HV1ZH</name>
<keyword id="KW-0014">AIDS</keyword>
<keyword id="KW-0053">Apoptosis</keyword>
<keyword id="KW-1165">Clathrin-mediated endocytosis of virus by host</keyword>
<keyword id="KW-0165">Cleavage on pair of basic residues</keyword>
<keyword id="KW-0175">Coiled coil</keyword>
<keyword id="KW-1015">Disulfide bond</keyword>
<keyword id="KW-1170">Fusion of virus membrane with host endosomal membrane</keyword>
<keyword id="KW-1168">Fusion of virus membrane with host membrane</keyword>
<keyword id="KW-0325">Glycoprotein</keyword>
<keyword id="KW-1032">Host cell membrane</keyword>
<keyword id="KW-1039">Host endosome</keyword>
<keyword id="KW-1043">Host membrane</keyword>
<keyword id="KW-0945">Host-virus interaction</keyword>
<keyword id="KW-0449">Lipoprotein</keyword>
<keyword id="KW-0472">Membrane</keyword>
<keyword id="KW-0564">Palmitate</keyword>
<keyword id="KW-0732">Signal</keyword>
<keyword id="KW-0812">Transmembrane</keyword>
<keyword id="KW-1133">Transmembrane helix</keyword>
<keyword id="KW-1161">Viral attachment to host cell</keyword>
<keyword id="KW-0261">Viral envelope protein</keyword>
<keyword id="KW-0899">Viral immunoevasion</keyword>
<keyword id="KW-1162">Viral penetration into host cytoplasm</keyword>
<keyword id="KW-0946">Virion</keyword>
<keyword id="KW-1164">Virus endocytosis by host</keyword>
<keyword id="KW-1160">Virus entry into host cell</keyword>
<comment type="function">
    <molecule>Envelope glycoprotein gp160</molecule>
    <text evidence="1">Oligomerizes in the host endoplasmic reticulum into predominantly trimers. In a second time, gp160 transits in the host Golgi, where glycosylation is completed. The precursor is then proteolytically cleaved in the trans-Golgi and thereby activated by cellular furin or furin-like proteases to produce gp120 and gp41.</text>
</comment>
<comment type="function">
    <molecule>Surface protein gp120</molecule>
    <text evidence="1">Attaches the virus to the host lymphoid cell by binding to the primary receptor CD4. This interaction induces a structural rearrangement creating a high affinity binding site for a chemokine coreceptor like CXCR4 and/or CCR5. Acts as a ligand for CD209/DC-SIGN and CLEC4M/DC-SIGNR, which are respectively found on dendritic cells (DCs), and on endothelial cells of liver sinusoids and lymph node sinuses. These interactions allow capture of viral particles at mucosal surfaces by these cells and subsequent transmission to permissive cells. HIV subverts the migration properties of dendritic cells to gain access to CD4+ T-cells in lymph nodes. Virus transmission to permissive T-cells occurs either in trans (without DCs infection, through viral capture and transmission), or in cis (following DCs productive infection, through the usual CD4-gp120 interaction), thereby inducing a robust infection. In trans infection, bound virions remain infectious over days and it is proposed that they are not degraded, but protected in non-lysosomal acidic organelles within the DCs close to the cell membrane thus contributing to the viral infectious potential during DCs' migration from the periphery to the lymphoid tissues. On arrival at lymphoid tissues, intact virions recycle back to DCs' cell surface allowing virus transmission to CD4+ T-cells.</text>
</comment>
<comment type="function">
    <molecule>Transmembrane protein gp41</molecule>
    <text evidence="1">Acts as a class I viral fusion protein. Under the current model, the protein has at least 3 conformational states: pre-fusion native state, pre-hairpin intermediate state, and post-fusion hairpin state. During fusion of viral and target intracellular membranes, the coiled coil regions (heptad repeats) assume a trimer-of-hairpins structure, positioning the fusion peptide in close proximity to the C-terminal region of the ectodomain. The formation of this structure appears to drive apposition and subsequent fusion of viral and target cell membranes. Complete fusion occurs in host cell endosomes and is dynamin-dependent, however some lipid transfer might occur at the plasma membrane. The virus undergoes clathrin-dependent internalization long before endosomal fusion, thus minimizing the surface exposure of conserved viral epitopes during fusion and reducing the efficacy of inhibitors targeting these epitopes. Membranes fusion leads to delivery of the nucleocapsid into the cytoplasm.</text>
</comment>
<comment type="subunit">
    <molecule>Surface protein gp120</molecule>
    <text evidence="1">The mature envelope protein (Env) consists of a homotrimer of non-covalently associated gp120-gp41 heterodimers. The resulting complex protrudes from the virus surface as a spike. There seems to be as few as 10 spikes on the average virion. Interacts with host CD4, CCR5 and CXCR4. Gp120 also interacts with the C-type lectins CD209/DC-SIGN and CLEC4M/DC-SIGNR (collectively referred to as DC-SIGN(R)). Gp120 and gp41 interact with GalCer. Gp120 interacts with host ITGA4/ITGB7 complex; on CD4+ T-cells, this interaction results in rapid activation of integrin ITGAL/LFA-1, which facilitates efficient cell-to-cell spreading of HIV-1. Gp120 interacts with cell-associated heparan sulfate; this interaction increases virus infectivity on permissive cells and may be involved in infection of CD4- cells.</text>
</comment>
<comment type="subunit">
    <molecule>Transmembrane protein gp41</molecule>
    <text evidence="1">The mature envelope protein (Env) consists of a homotrimer of non-covalently associated gp120-gp41 heterodimers. The resulting complex protrudes from the virus surface as a spike. There seems to be as few as 10 spikes on the average virion.</text>
</comment>
<comment type="subcellular location">
    <molecule>Surface protein gp120</molecule>
    <subcellularLocation>
        <location evidence="1">Virion membrane</location>
        <topology evidence="1">Peripheral membrane protein</topology>
    </subcellularLocation>
    <subcellularLocation>
        <location evidence="1">Host cell membrane</location>
        <topology evidence="1">Peripheral membrane protein</topology>
    </subcellularLocation>
    <subcellularLocation>
        <location evidence="1">Host endosome membrane</location>
        <topology evidence="1">Single-pass type I membrane protein</topology>
    </subcellularLocation>
    <text evidence="1">The surface protein is not anchored to the viral envelope, but associates with the extravirion surface through its binding to TM. It is probably concentrated at the site of budding and incorporated into the virions possibly by contacts between the cytoplasmic tail of Env and the N-terminus of Gag.</text>
</comment>
<comment type="subcellular location">
    <molecule>Transmembrane protein gp41</molecule>
    <subcellularLocation>
        <location evidence="1">Virion membrane</location>
        <topology evidence="1">Single-pass type I membrane protein</topology>
    </subcellularLocation>
    <subcellularLocation>
        <location evidence="1">Host cell membrane</location>
        <topology evidence="1">Single-pass type I membrane protein</topology>
    </subcellularLocation>
    <subcellularLocation>
        <location evidence="1">Host endosome membrane</location>
        <topology evidence="1">Single-pass type I membrane protein</topology>
    </subcellularLocation>
    <text evidence="1">It is probably concentrated at the site of budding and incorporated into the virions possibly by contacts between the cytoplasmic tail of Env and the N-terminus of Gag.</text>
</comment>
<comment type="domain">
    <text evidence="1">Some of the most genetically diverse regions of the viral genome are present in Env. They are called variable regions 1 through 5 (V1 through V5). Coreceptor usage of gp120 is determined mainly by the primary structure of the third variable region (V3) in the outer domain of gp120. The sequence of V3 determines which coreceptor, CCR5 and/or CXCR4 (corresponding to R5/macrophage, X4/T cell and R5X4/T cell and macrophage tropism), is used to trigger the fusion potential of the Env complex, and hence which cells the virus can infect. Binding to CCR5 involves a region adjacent in addition to V3.</text>
</comment>
<comment type="domain">
    <text evidence="1">The membrane proximal external region (MPER) present in gp41 is a tryptophan-rich region recognized by the antibodies 2F5, Z13, and 4E10. MPER seems to play a role in fusion.</text>
</comment>
<comment type="domain">
    <text evidence="1">The 17 amino acids long immunosuppressive region is present in many retroviral envelope proteins. Synthetic peptides derived from this relatively conserved sequence inhibit immune function in vitro and in vivo.</text>
</comment>
<comment type="domain">
    <text evidence="1">The YXXL motif is involved in determining the exact site of viral release at the surface of infected mononuclear cells and promotes endocytosis. YXXL and di-leucine endocytosis motifs interact directly or indirectly with the clathrin adapter complexes, opperate independently, and their activities are not additive.</text>
</comment>
<comment type="domain">
    <text evidence="1">The CD4-binding region is targeted by the antibody b12.</text>
</comment>
<comment type="PTM">
    <text evidence="1">Highly glycosylated by host. The high number of glycan on the protein is reffered to as 'glycan shield' because it contributes to hide protein sequence from adaptive immune system.</text>
</comment>
<comment type="PTM">
    <text evidence="1">Palmitoylation of the transmembrane protein and of Env polyprotein (prior to its proteolytic cleavage) is essential for their association with host cell membrane lipid rafts. Palmitoylation is therefore required for envelope trafficking to classical lipid rafts, but not for viral replication.</text>
</comment>
<comment type="PTM">
    <text evidence="1">Specific enzymatic cleavages in vivo yield mature proteins. Envelope glycoproteins are synthesized as an inactive precursor that is heavily N-glycosylated and processed likely by host cell furin in the Golgi to yield the mature SU and TM proteins. The cleavage site between SU and TM requires the minimal sequence [KR]-X-[KR]-R. About 2 of the 9 disulfide bonds of gp41 are reduced by P4HB/PDI, following binding to CD4 receptor.</text>
</comment>
<comment type="miscellaneous">
    <text evidence="1">Inhibitors targeting HIV-1 viral envelope proteins are used as antiretroviral drugs. Attachment of virions to the cell surface via non-specific interactions and CD4 binding can be blocked by inhibitors that include cyanovirin-N, cyclotriazadisulfonamide analogs, PRO 2000, TNX 355 and PRO 542. In addition, BMS 806 can block CD4-induced conformational changes. Env interactions with the coreceptor molecules can be targeted by CCR5 antagonists including SCH-D, maraviroc (UK 427857) and aplaviroc (GW 873140), and the CXCR4 antagonist AMD 070. Fusion of viral and cellular membranes can be inhibited by peptides such as enfuvirtide and tifuvirtide (T 1249). Resistance to inhibitors associated with mutations in Env are observed. Most of the time, single mutations confer only a modest reduction in drug susceptibility. Combination of several mutations is usually required to develop a high-level drug resistance.</text>
</comment>
<comment type="miscellaneous">
    <text evidence="1">HIV-1 lineages are divided in three main groups, M (for Major), O (for Outlier), and N (for New, or Non-M, Non-O). The vast majority of strains found worldwide belong to the group M. Group O seems to be endemic to and largely confined to Cameroon and neighboring countries in West Central Africa, where these viruses represent a small minority of HIV-1 strains. The group N is represented by a limited number of isolates from Cameroonian persons. The group M is further subdivided in 9 clades or subtypes (A to D, F to H, J and K).</text>
</comment>
<comment type="similarity">
    <text evidence="1">Belongs to the HIV-1 env protein family.</text>
</comment>
<comment type="online information" name="hivdb">
    <link uri="https://hivdb.stanford.edu"/>
    <text>HIV drug resistance database</text>
</comment>
<comment type="online information" name="HIV drug resistance mutations">
    <link uri="https://www.iasusa.org/hiv-drug-resistance/hiv-drug-resistance-mutations/"/>
</comment>
<gene>
    <name evidence="1" type="primary">env</name>
</gene>
<evidence type="ECO:0000255" key="1">
    <source>
        <dbReference type="HAMAP-Rule" id="MF_04083"/>
    </source>
</evidence>
<evidence type="ECO:0000256" key="2">
    <source>
        <dbReference type="SAM" id="MobiDB-lite"/>
    </source>
</evidence>
<protein>
    <recommendedName>
        <fullName evidence="1">Envelope glycoprotein gp160</fullName>
    </recommendedName>
    <alternativeName>
        <fullName evidence="1">Env polyprotein</fullName>
    </alternativeName>
    <component>
        <recommendedName>
            <fullName evidence="1">Surface protein gp120</fullName>
            <shortName evidence="1">SU</shortName>
        </recommendedName>
        <alternativeName>
            <fullName evidence="1">Glycoprotein 120</fullName>
            <shortName evidence="1">gp120</shortName>
        </alternativeName>
    </component>
    <component>
        <recommendedName>
            <fullName evidence="1">Transmembrane protein gp41</fullName>
            <shortName evidence="1">TM</shortName>
        </recommendedName>
        <alternativeName>
            <fullName evidence="1">Glycoprotein 41</fullName>
            <shortName evidence="1">gp41</shortName>
        </alternativeName>
    </component>
</protein>
<organismHost>
    <name type="scientific">Homo sapiens</name>
    <name type="common">Human</name>
    <dbReference type="NCBI Taxonomy" id="9606"/>
</organismHost>
<accession>P05881</accession>
<feature type="signal peptide" evidence="1">
    <location>
        <begin position="1"/>
        <end position="31"/>
    </location>
</feature>
<feature type="chain" id="PRO_0000239480" description="Envelope glycoprotein gp160" evidence="1">
    <location>
        <begin position="32"/>
        <end position="856"/>
    </location>
</feature>
<feature type="chain" id="PRO_0000038400" description="Surface protein gp120" evidence="1">
    <location>
        <begin position="32"/>
        <end position="511"/>
    </location>
</feature>
<feature type="chain" id="PRO_0000038401" description="Transmembrane protein gp41" evidence="1">
    <location>
        <begin position="512"/>
        <end position="856"/>
    </location>
</feature>
<feature type="topological domain" description="Extracellular" evidence="1">
    <location>
        <begin position="32"/>
        <end position="684"/>
    </location>
</feature>
<feature type="transmembrane region" description="Helical" evidence="1">
    <location>
        <begin position="685"/>
        <end position="705"/>
    </location>
</feature>
<feature type="topological domain" description="Cytoplasmic" evidence="1">
    <location>
        <begin position="706"/>
        <end position="856"/>
    </location>
</feature>
<feature type="region of interest" description="V1" evidence="1">
    <location>
        <begin position="130"/>
        <end position="152"/>
    </location>
</feature>
<feature type="region of interest" description="V2" evidence="1">
    <location>
        <begin position="153"/>
        <end position="197"/>
    </location>
</feature>
<feature type="region of interest" description="V3" evidence="1">
    <location>
        <begin position="297"/>
        <end position="330"/>
    </location>
</feature>
<feature type="region of interest" description="CD4-binding loop" evidence="1">
    <location>
        <begin position="365"/>
        <end position="375"/>
    </location>
</feature>
<feature type="region of interest" description="V4" evidence="1">
    <location>
        <begin position="386"/>
        <end position="418"/>
    </location>
</feature>
<feature type="region of interest" description="V5">
    <location>
        <begin position="461"/>
        <end position="471"/>
    </location>
</feature>
<feature type="region of interest" description="V5" evidence="1">
    <location>
        <begin position="463"/>
        <end position="471"/>
    </location>
</feature>
<feature type="region of interest" description="Fusion peptide" evidence="1">
    <location>
        <begin position="512"/>
        <end position="532"/>
    </location>
</feature>
<feature type="region of interest" description="Immunosuppression" evidence="1">
    <location>
        <begin position="574"/>
        <end position="592"/>
    </location>
</feature>
<feature type="region of interest" description="MPER; binding to GalCer" evidence="1">
    <location>
        <begin position="662"/>
        <end position="683"/>
    </location>
</feature>
<feature type="region of interest" description="Disordered" evidence="2">
    <location>
        <begin position="720"/>
        <end position="742"/>
    </location>
</feature>
<feature type="coiled-coil region" evidence="1">
    <location>
        <begin position="633"/>
        <end position="667"/>
    </location>
</feature>
<feature type="short sequence motif" description="YXXL motif; contains endocytosis signal" evidence="1">
    <location>
        <begin position="712"/>
        <end position="715"/>
    </location>
</feature>
<feature type="short sequence motif" description="Di-leucine internalization motif" evidence="1">
    <location>
        <begin position="855"/>
        <end position="856"/>
    </location>
</feature>
<feature type="compositionally biased region" description="Basic and acidic residues" evidence="2">
    <location>
        <begin position="723"/>
        <end position="742"/>
    </location>
</feature>
<feature type="site" description="Cleavage; by host furin" evidence="1">
    <location>
        <begin position="511"/>
        <end position="512"/>
    </location>
</feature>
<feature type="lipid moiety-binding region" description="S-palmitoyl cysteine; by host" evidence="1">
    <location>
        <position position="764"/>
    </location>
</feature>
<feature type="glycosylation site" description="N-linked (GlcNAc...) asparagine; by host" evidence="1">
    <location>
        <position position="87"/>
    </location>
</feature>
<feature type="glycosylation site" description="N-linked (GlcNAc...) asparagine; by host" evidence="1">
    <location>
        <position position="132"/>
    </location>
</feature>
<feature type="glycosylation site" description="N-linked (GlcNAc...) asparagine; by host" evidence="1">
    <location>
        <position position="138"/>
    </location>
</feature>
<feature type="glycosylation site" description="N-linked (GlcNAc...) asparagine; by host" evidence="1">
    <location>
        <position position="152"/>
    </location>
</feature>
<feature type="glycosylation site" description="N-linked (GlcNAc...) asparagine; by host" evidence="1">
    <location>
        <position position="156"/>
    </location>
</feature>
<feature type="glycosylation site" description="N-linked (GlcNAc...) asparagine; by host" evidence="1">
    <location>
        <position position="183"/>
    </location>
</feature>
<feature type="glycosylation site" description="N-linked (GlcNAc...) asparagine; by host" evidence="1">
    <location>
        <position position="198"/>
    </location>
</feature>
<feature type="glycosylation site" description="N-linked (GlcNAc...) asparagine; by host" evidence="1">
    <location>
        <position position="242"/>
    </location>
</feature>
<feature type="glycosylation site" description="N-linked (GlcNAc...) asparagine; by host" evidence="1">
    <location>
        <position position="263"/>
    </location>
</feature>
<feature type="glycosylation site" description="N-linked (GlcNAc...) asparagine; by host" evidence="1">
    <location>
        <position position="277"/>
    </location>
</feature>
<feature type="glycosylation site" description="N-linked (GlcNAc...) asparagine; by host" evidence="1">
    <location>
        <position position="294"/>
    </location>
</feature>
<feature type="glycosylation site" description="N-linked (GlcNAc...) asparagine; by host" evidence="1">
    <location>
        <position position="302"/>
    </location>
</feature>
<feature type="glycosylation site" description="N-linked (GlcNAc...) asparagine; by host" evidence="1">
    <location>
        <position position="332"/>
    </location>
</feature>
<feature type="glycosylation site" description="N-linked (GlcNAc...) asparagine; by host" evidence="1">
    <location>
        <position position="339"/>
    </location>
</feature>
<feature type="glycosylation site" description="N-linked (GlcNAc...) asparagine; by host" evidence="1">
    <location>
        <position position="355"/>
    </location>
</feature>
<feature type="glycosylation site" description="N-linked (GlcNAc...) asparagine; by host" evidence="1">
    <location>
        <position position="364"/>
    </location>
</feature>
<feature type="glycosylation site" description="N-linked (GlcNAc...) asparagine; by host" evidence="1">
    <location>
        <position position="387"/>
    </location>
</feature>
<feature type="glycosylation site" description="N-linked (GlcNAc...) asparagine; by host" evidence="1">
    <location>
        <position position="393"/>
    </location>
</feature>
<feature type="glycosylation site" description="N-linked (GlcNAc...) asparagine; by host" evidence="1">
    <location>
        <position position="398"/>
    </location>
</feature>
<feature type="glycosylation site" description="N-linked (GlcNAc...) asparagine; by host" evidence="1">
    <location>
        <position position="402"/>
    </location>
</feature>
<feature type="glycosylation site" description="N-linked (GlcNAc...) asparagine; by host" evidence="1">
    <location>
        <position position="411"/>
    </location>
</feature>
<feature type="glycosylation site" description="N-linked (GlcNAc...) asparagine; by host" evidence="1">
    <location>
        <position position="448"/>
    </location>
</feature>
<feature type="glycosylation site" description="N-linked (GlcNAc...) asparagine; by host" evidence="1">
    <location>
        <position position="461"/>
    </location>
</feature>
<feature type="glycosylation site" description="N-linked (GlcNAc...) asparagine; by host" evidence="1">
    <location>
        <position position="462"/>
    </location>
</feature>
<feature type="glycosylation site" description="N-linked (GlcNAc...) asparagine; by host" evidence="1">
    <location>
        <position position="465"/>
    </location>
</feature>
<feature type="glycosylation site" description="N-linked (GlcNAc...) asparagine; by host" evidence="1">
    <location>
        <position position="611"/>
    </location>
</feature>
<feature type="glycosylation site" description="N-linked (GlcNAc...) asparagine; by host" evidence="1">
    <location>
        <position position="616"/>
    </location>
</feature>
<feature type="glycosylation site" description="N-linked (GlcNAc...) asparagine; by host" evidence="1">
    <location>
        <position position="637"/>
    </location>
</feature>
<feature type="disulfide bond" evidence="1">
    <location>
        <begin position="53"/>
        <end position="73"/>
    </location>
</feature>
<feature type="disulfide bond" evidence="1">
    <location>
        <begin position="118"/>
        <end position="206"/>
    </location>
</feature>
<feature type="disulfide bond" evidence="1">
    <location>
        <begin position="125"/>
        <end position="197"/>
    </location>
</feature>
<feature type="disulfide bond" evidence="1">
    <location>
        <begin position="130"/>
        <end position="153"/>
    </location>
</feature>
<feature type="disulfide bond" evidence="1">
    <location>
        <begin position="219"/>
        <end position="248"/>
    </location>
</feature>
<feature type="disulfide bond" evidence="1">
    <location>
        <begin position="229"/>
        <end position="240"/>
    </location>
</feature>
<feature type="disulfide bond" evidence="1">
    <location>
        <begin position="297"/>
        <end position="331"/>
    </location>
</feature>
<feature type="disulfide bond" evidence="1">
    <location>
        <begin position="379"/>
        <end position="445"/>
    </location>
</feature>
<feature type="disulfide bond" evidence="1">
    <location>
        <begin position="386"/>
        <end position="418"/>
    </location>
</feature>
<feature type="disulfide bond" evidence="1">
    <location>
        <begin position="598"/>
        <end position="604"/>
    </location>
</feature>
<dbReference type="EMBL" id="M15896">
    <property type="protein sequence ID" value="AAB53948.1"/>
    <property type="molecule type" value="Genomic_RNA"/>
</dbReference>
<dbReference type="PIR" id="A44963">
    <property type="entry name" value="A44963"/>
</dbReference>
<dbReference type="SMR" id="P05881"/>
<dbReference type="GlyCosmos" id="P05881">
    <property type="glycosylation" value="28 sites, No reported glycans"/>
</dbReference>
<dbReference type="ABCD" id="P05881">
    <property type="antibodies" value="1 sequenced antibody"/>
</dbReference>
<dbReference type="Reactome" id="R-HSA-5621480">
    <property type="pathway name" value="Dectin-2 family"/>
</dbReference>
<dbReference type="GO" id="GO:0044175">
    <property type="term" value="C:host cell endosome membrane"/>
    <property type="evidence" value="ECO:0007669"/>
    <property type="project" value="UniProtKB-SubCell"/>
</dbReference>
<dbReference type="GO" id="GO:0020002">
    <property type="term" value="C:host cell plasma membrane"/>
    <property type="evidence" value="ECO:0007669"/>
    <property type="project" value="UniProtKB-SubCell"/>
</dbReference>
<dbReference type="GO" id="GO:0016020">
    <property type="term" value="C:membrane"/>
    <property type="evidence" value="ECO:0007669"/>
    <property type="project" value="UniProtKB-UniRule"/>
</dbReference>
<dbReference type="GO" id="GO:0019031">
    <property type="term" value="C:viral envelope"/>
    <property type="evidence" value="ECO:0007669"/>
    <property type="project" value="UniProtKB-KW"/>
</dbReference>
<dbReference type="GO" id="GO:0055036">
    <property type="term" value="C:virion membrane"/>
    <property type="evidence" value="ECO:0007669"/>
    <property type="project" value="UniProtKB-SubCell"/>
</dbReference>
<dbReference type="GO" id="GO:0005198">
    <property type="term" value="F:structural molecule activity"/>
    <property type="evidence" value="ECO:0007669"/>
    <property type="project" value="UniProtKB-UniRule"/>
</dbReference>
<dbReference type="GO" id="GO:0075512">
    <property type="term" value="P:clathrin-dependent endocytosis of virus by host cell"/>
    <property type="evidence" value="ECO:0007669"/>
    <property type="project" value="UniProtKB-UniRule"/>
</dbReference>
<dbReference type="GO" id="GO:0039654">
    <property type="term" value="P:fusion of virus membrane with host endosome membrane"/>
    <property type="evidence" value="ECO:0007669"/>
    <property type="project" value="UniProtKB-UniRule"/>
</dbReference>
<dbReference type="GO" id="GO:0019064">
    <property type="term" value="P:fusion of virus membrane with host plasma membrane"/>
    <property type="evidence" value="ECO:0007669"/>
    <property type="project" value="UniProtKB-UniRule"/>
</dbReference>
<dbReference type="GO" id="GO:1903908">
    <property type="term" value="P:positive regulation of plasma membrane raft polarization"/>
    <property type="evidence" value="ECO:0007669"/>
    <property type="project" value="UniProtKB-UniRule"/>
</dbReference>
<dbReference type="GO" id="GO:1903911">
    <property type="term" value="P:positive regulation of receptor clustering"/>
    <property type="evidence" value="ECO:0007669"/>
    <property type="project" value="UniProtKB-UniRule"/>
</dbReference>
<dbReference type="GO" id="GO:0019082">
    <property type="term" value="P:viral protein processing"/>
    <property type="evidence" value="ECO:0007669"/>
    <property type="project" value="UniProtKB-UniRule"/>
</dbReference>
<dbReference type="GO" id="GO:0019062">
    <property type="term" value="P:virion attachment to host cell"/>
    <property type="evidence" value="ECO:0007669"/>
    <property type="project" value="UniProtKB-UniRule"/>
</dbReference>
<dbReference type="CDD" id="cd09909">
    <property type="entry name" value="HIV-1-like_HR1-HR2"/>
    <property type="match status" value="1"/>
</dbReference>
<dbReference type="FunFam" id="1.10.287.210:FF:000001">
    <property type="entry name" value="Envelope glycoprotein gp160"/>
    <property type="match status" value="1"/>
</dbReference>
<dbReference type="FunFam" id="1.20.5.490:FF:000001">
    <property type="entry name" value="Envelope glycoprotein gp160"/>
    <property type="match status" value="1"/>
</dbReference>
<dbReference type="FunFam" id="2.170.40.20:FF:000003">
    <property type="entry name" value="Envelope glycoprotein gp160"/>
    <property type="match status" value="1"/>
</dbReference>
<dbReference type="FunFam" id="2.170.40.20:FF:000004">
    <property type="entry name" value="Envelope glycoprotein gp160"/>
    <property type="match status" value="1"/>
</dbReference>
<dbReference type="Gene3D" id="1.10.287.210">
    <property type="match status" value="1"/>
</dbReference>
<dbReference type="Gene3D" id="2.170.40.20">
    <property type="entry name" value="Human immunodeficiency virus 1, Gp160, envelope glycoprotein"/>
    <property type="match status" value="2"/>
</dbReference>
<dbReference type="Gene3D" id="1.20.5.490">
    <property type="entry name" value="Single helix bin"/>
    <property type="match status" value="1"/>
</dbReference>
<dbReference type="HAMAP" id="MF_04083">
    <property type="entry name" value="HIV_ENV"/>
    <property type="match status" value="1"/>
</dbReference>
<dbReference type="InterPro" id="IPR036377">
    <property type="entry name" value="Gp120_core_sf"/>
</dbReference>
<dbReference type="InterPro" id="IPR037527">
    <property type="entry name" value="Gp160"/>
</dbReference>
<dbReference type="InterPro" id="IPR000328">
    <property type="entry name" value="GP41-like"/>
</dbReference>
<dbReference type="InterPro" id="IPR000777">
    <property type="entry name" value="HIV1_Gp120"/>
</dbReference>
<dbReference type="Pfam" id="PF00516">
    <property type="entry name" value="GP120"/>
    <property type="match status" value="2"/>
</dbReference>
<dbReference type="Pfam" id="PF00517">
    <property type="entry name" value="GP41"/>
    <property type="match status" value="1"/>
</dbReference>
<dbReference type="SUPFAM" id="SSF56502">
    <property type="entry name" value="gp120 core"/>
    <property type="match status" value="2"/>
</dbReference>
<dbReference type="SUPFAM" id="SSF58069">
    <property type="entry name" value="Virus ectodomain"/>
    <property type="match status" value="1"/>
</dbReference>
<reference key="1">
    <citation type="journal article" date="1989" name="AIDS Res. Hum. Retroviruses">
        <title>Molecular characterization of HIV-1 isolated from a serum collected in 1976: nucleotide sequence comparison to recent isolates and generation of hybrid HIV.</title>
        <authorList>
            <person name="Srinivasan A."/>
            <person name="York D."/>
            <person name="Butler D. Jr."/>
            <person name="Jannoun-Nasr R."/>
            <person name="Getchell J."/>
            <person name="McCormick J."/>
            <person name="Ou C.Y."/>
            <person name="Myers G."/>
            <person name="Smith T."/>
            <person name="Chen E."/>
        </authorList>
    </citation>
    <scope>NUCLEOTIDE SEQUENCE [GENOMIC RNA]</scope>
</reference>
<reference key="2">
    <citation type="journal article" date="2003" name="APMIS">
        <title>Pathogens target DC-SIGN to influence their fate DC-SIGN functions as a pathogen receptor with broad specificity.</title>
        <authorList>
            <person name="Geijtenbeek T.B."/>
            <person name="van Kooyk Y."/>
        </authorList>
    </citation>
    <scope>REVIEW</scope>
</reference>
<reference key="3">
    <citation type="journal article" date="2003" name="Biochim. Biophys. Acta">
        <title>The HIV Env-mediated fusion reaction.</title>
        <authorList>
            <person name="Gallo S.A."/>
            <person name="Finnegan C.M."/>
            <person name="Viard M."/>
            <person name="Raviv Y."/>
            <person name="Dimitrov A."/>
            <person name="Rawat S.S."/>
            <person name="Puri A."/>
            <person name="Durell S."/>
            <person name="Blumenthal R."/>
        </authorList>
    </citation>
    <scope>REVIEW</scope>
</reference>
<reference key="4">
    <citation type="journal article" date="2005" name="Cell Death Differ.">
        <title>Mechanisms of apoptosis induction by the HIV-1 envelope.</title>
        <authorList>
            <person name="Perfettini J.-L."/>
            <person name="Castedo M."/>
            <person name="Roumier T."/>
            <person name="Andreau K."/>
            <person name="Nardacci R."/>
            <person name="Piacentini M."/>
            <person name="Kroemer G."/>
        </authorList>
    </citation>
    <scope>REVIEW</scope>
</reference>
<reference key="5">
    <citation type="journal article" date="2005" name="AIDS Res. Hum. Retroviruses">
        <title>V3: HIV's switch-hitter.</title>
        <authorList>
            <person name="Hartley O."/>
            <person name="Klasse P.J."/>
            <person name="Sattentau Q.J."/>
            <person name="Moore J.P."/>
        </authorList>
    </citation>
    <scope>REVIEW</scope>
</reference>
<reference key="6">
    <citation type="journal article" date="2005" name="Drugs">
        <title>Emerging drug targets for antiretroviral therapy.</title>
        <authorList>
            <person name="Reeves J.D."/>
            <person name="Piefer A.J."/>
        </authorList>
    </citation>
    <scope>REVIEW</scope>
</reference>
<reference key="7">
    <citation type="journal article" date="2006" name="EMBO J.">
        <title>HIV and the chemokine system: 10 years later.</title>
        <authorList>
            <person name="Lusso P."/>
        </authorList>
    </citation>
    <scope>REVIEW</scope>
</reference>
<sequence length="856" mass="96909">MKVKGIQGNWQNWWKWGTLILGLVIICSAAENLWVTVYYGVPVWKDAETTLFCASDAKAYDTEKHNVWATHACVPTDPNPQELSLGNVTEKFDMWKNNMVEQMHEDVISLWDQSLKPCVKLTPLCVTLSCHNITIKDNNTNVDTEMKEEIKNCSYNMTTELRDKQRKIYSLFYRLDIVPIGGNSSNGDSSKYRLINCNTSAITQACPKVSFEPIPIHYCAPAGFAILKCRDEEFEGKGPCRNVSTVQCTHGIRPVVSTQLLLNGSLAEGEVRIRSENFTDNAKIIIVQLVKPVNITCMRPNNNTRKSISIGPGRAFFATGDIIGDIRQAHCNVSRTEWNDTLSKVAAQLRKHFVNTSTDIIFANSSGGDVEITTHSFNCGGEFFYCNTSGLFNGTWLNGTSNNTWKIDTVNDTIILPCRIKQIVNMWQRVGQAMYAPPIKGVIKCVSNITGILLTRDGVGNNTSNETFRPGGGDMRDNWRSELYKYKVVKIEPLGVAPTKAKRRVVAREKRAIGMGAFFLGFLGAAGSTMGAASITLTVQARRLLSGIVQQQNNLLRAIEAQQHLLKLTVWGIKQLQARILAVERYLKDQQLLGIWGCSGKIICPTNVPWNSSWSNKSQSDIWDKMTWLEWDKEVSNYTQVIYNLIEESQTQQEINERDLLALDKWANLWNWFDISNWLWYIKIFIMIVGGLIGLRIVFAVLSIINRVRQGYSPLSFQTLTHHQREPDRPERIEEGGGEQDRDRSIRLVSGFLPLAWDDLRSLCLFCYHRLRDCALIAARIVETLIRRGWETLKYLGNLVIYWGQELKNSAINLLDTVAIAVADWTDRVIEVVQRAGRAFLNIPRRIRQGLERALL</sequence>
<organism>
    <name type="scientific">Human immunodeficiency virus type 1 group M subtype A (isolate Z321)</name>
    <name type="common">HIV-1</name>
    <dbReference type="NCBI Taxonomy" id="11692"/>
    <lineage>
        <taxon>Viruses</taxon>
        <taxon>Riboviria</taxon>
        <taxon>Pararnavirae</taxon>
        <taxon>Artverviricota</taxon>
        <taxon>Revtraviricetes</taxon>
        <taxon>Ortervirales</taxon>
        <taxon>Retroviridae</taxon>
        <taxon>Orthoretrovirinae</taxon>
        <taxon>Lentivirus</taxon>
        <taxon>Human immunodeficiency virus type 1</taxon>
    </lineage>
</organism>
<proteinExistence type="inferred from homology"/>